<name>ARCR_STAA8</name>
<proteinExistence type="evidence at protein level"/>
<keyword id="KW-0010">Activator</keyword>
<keyword id="KW-0114">cAMP</keyword>
<keyword id="KW-0116">cAMP-binding</keyword>
<keyword id="KW-0963">Cytoplasm</keyword>
<keyword id="KW-0238">DNA-binding</keyword>
<keyword id="KW-0547">Nucleotide-binding</keyword>
<keyword id="KW-1185">Reference proteome</keyword>
<keyword id="KW-0804">Transcription</keyword>
<keyword id="KW-0805">Transcription regulation</keyword>
<organism>
    <name type="scientific">Staphylococcus aureus (strain NCTC 8325 / PS 47)</name>
    <dbReference type="NCBI Taxonomy" id="93061"/>
    <lineage>
        <taxon>Bacteria</taxon>
        <taxon>Bacillati</taxon>
        <taxon>Bacillota</taxon>
        <taxon>Bacilli</taxon>
        <taxon>Bacillales</taxon>
        <taxon>Staphylococcaceae</taxon>
        <taxon>Staphylococcus</taxon>
    </lineage>
</organism>
<evidence type="ECO:0000250" key="1"/>
<evidence type="ECO:0000269" key="2">
    <source>
    </source>
</evidence>
<evidence type="ECO:0000305" key="3">
    <source>
    </source>
</evidence>
<gene>
    <name type="primary">arcR</name>
    <name type="ordered locus">SAOUHSC_02964</name>
</gene>
<accession>Q2FUY1</accession>
<accession>Q7X2S1</accession>
<protein>
    <recommendedName>
        <fullName>HTH-type transcriptional regulator ArcR</fullName>
    </recommendedName>
</protein>
<comment type="function">
    <text evidence="2">Positively regulates the expression of the arcABDCR operon under anaerobic conditions, by binding to the consensus motif 5'-TGTGAN(6)TCACA-3', thus playing an essential role in arginine catabolism. May also control the expression of genes encoding proteins which are involved in anaerobic metabolism. Can bind cyclic AMP.</text>
</comment>
<comment type="subcellular location">
    <subcellularLocation>
        <location evidence="3">Cytoplasm</location>
    </subcellularLocation>
</comment>
<comment type="induction">
    <text evidence="2">Induced by arginine and anaerobic growth during the stationary phase. Repressed under aerobic conditions independently of the growth phase and by glucose catabolic repression.</text>
</comment>
<dbReference type="EMBL" id="AJ566750">
    <property type="protein sequence ID" value="CAD98185.1"/>
    <property type="molecule type" value="Genomic_DNA"/>
</dbReference>
<dbReference type="EMBL" id="CP000253">
    <property type="protein sequence ID" value="ABD31954.1"/>
    <property type="molecule type" value="Genomic_DNA"/>
</dbReference>
<dbReference type="RefSeq" id="WP_000138214.1">
    <property type="nucleotide sequence ID" value="NZ_LS483365.1"/>
</dbReference>
<dbReference type="RefSeq" id="YP_501415.1">
    <property type="nucleotide sequence ID" value="NC_007795.1"/>
</dbReference>
<dbReference type="SMR" id="Q2FUY1"/>
<dbReference type="STRING" id="93061.SAOUHSC_02964"/>
<dbReference type="PaxDb" id="1280-SAXN108_2902"/>
<dbReference type="GeneID" id="3921666"/>
<dbReference type="KEGG" id="sao:SAOUHSC_02964"/>
<dbReference type="PATRIC" id="fig|93061.5.peg.2674"/>
<dbReference type="eggNOG" id="COG0664">
    <property type="taxonomic scope" value="Bacteria"/>
</dbReference>
<dbReference type="HOGENOM" id="CLU_1160528_0_0_9"/>
<dbReference type="OrthoDB" id="2397993at2"/>
<dbReference type="PRO" id="PR:Q2FUY1"/>
<dbReference type="Proteomes" id="UP000008816">
    <property type="component" value="Chromosome"/>
</dbReference>
<dbReference type="GO" id="GO:0005829">
    <property type="term" value="C:cytosol"/>
    <property type="evidence" value="ECO:0000318"/>
    <property type="project" value="GO_Central"/>
</dbReference>
<dbReference type="GO" id="GO:0030552">
    <property type="term" value="F:cAMP binding"/>
    <property type="evidence" value="ECO:0007669"/>
    <property type="project" value="UniProtKB-KW"/>
</dbReference>
<dbReference type="GO" id="GO:0003677">
    <property type="term" value="F:DNA binding"/>
    <property type="evidence" value="ECO:0007669"/>
    <property type="project" value="UniProtKB-KW"/>
</dbReference>
<dbReference type="GO" id="GO:0003700">
    <property type="term" value="F:DNA-binding transcription factor activity"/>
    <property type="evidence" value="ECO:0000318"/>
    <property type="project" value="GO_Central"/>
</dbReference>
<dbReference type="GO" id="GO:0006355">
    <property type="term" value="P:regulation of DNA-templated transcription"/>
    <property type="evidence" value="ECO:0000315"/>
    <property type="project" value="CACAO"/>
</dbReference>
<dbReference type="Gene3D" id="2.60.120.10">
    <property type="entry name" value="Jelly Rolls"/>
    <property type="match status" value="1"/>
</dbReference>
<dbReference type="Gene3D" id="1.10.10.10">
    <property type="entry name" value="Winged helix-like DNA-binding domain superfamily/Winged helix DNA-binding domain"/>
    <property type="match status" value="1"/>
</dbReference>
<dbReference type="InterPro" id="IPR000595">
    <property type="entry name" value="cNMP-bd_dom"/>
</dbReference>
<dbReference type="InterPro" id="IPR018490">
    <property type="entry name" value="cNMP-bd_dom_sf"/>
</dbReference>
<dbReference type="InterPro" id="IPR012318">
    <property type="entry name" value="HTH_CRP"/>
</dbReference>
<dbReference type="InterPro" id="IPR014710">
    <property type="entry name" value="RmlC-like_jellyroll"/>
</dbReference>
<dbReference type="InterPro" id="IPR036388">
    <property type="entry name" value="WH-like_DNA-bd_sf"/>
</dbReference>
<dbReference type="InterPro" id="IPR036390">
    <property type="entry name" value="WH_DNA-bd_sf"/>
</dbReference>
<dbReference type="Pfam" id="PF00027">
    <property type="entry name" value="cNMP_binding"/>
    <property type="match status" value="1"/>
</dbReference>
<dbReference type="Pfam" id="PF13545">
    <property type="entry name" value="HTH_Crp_2"/>
    <property type="match status" value="1"/>
</dbReference>
<dbReference type="SUPFAM" id="SSF51206">
    <property type="entry name" value="cAMP-binding domain-like"/>
    <property type="match status" value="1"/>
</dbReference>
<dbReference type="SUPFAM" id="SSF46785">
    <property type="entry name" value="Winged helix' DNA-binding domain"/>
    <property type="match status" value="1"/>
</dbReference>
<sequence>MTENFILGRNNKLEHELKALADYINIPYSILQPYQSECFVRHYTKGQVIYFSPQESSNIYFLIEGNIIREHYNQNGDVYRYFNKEQVLFPISNLFHPKEVNELCTALTDCTVLGLPRELMAFLCKANDDIFLTLFALINDNEQQHMNYNMALTSKFAKDRIIKLICHLCQTVGYDQDEFYEIKQFLTIQLMSDMAGISRETAGHIIHELKDEKLVVKDHKNWLVSKHLFNDVCV</sequence>
<feature type="chain" id="PRO_0000349414" description="HTH-type transcriptional regulator ArcR">
    <location>
        <begin position="1"/>
        <end position="234"/>
    </location>
</feature>
<feature type="domain" description="HTH crp-type">
    <location>
        <begin position="155"/>
        <end position="228"/>
    </location>
</feature>
<feature type="DNA-binding region" description="H-T-H motif" evidence="1">
    <location>
        <begin position="188"/>
        <end position="207"/>
    </location>
</feature>
<feature type="binding site">
    <location>
        <begin position="40"/>
        <end position="129"/>
    </location>
    <ligand>
        <name>a nucleoside 3',5'-cyclic phosphate</name>
        <dbReference type="ChEBI" id="CHEBI:58464"/>
    </ligand>
</feature>
<reference key="1">
    <citation type="journal article" date="2007" name="J. Bacteriol.">
        <title>Staphylococcus aureus arcR controls expression of the arginine deiminase operon.</title>
        <authorList>
            <person name="Makhlin J."/>
            <person name="Kofman T."/>
            <person name="Borovok I."/>
            <person name="Kohler C."/>
            <person name="Engelmann S."/>
            <person name="Cohen G."/>
            <person name="Aharonowitz Y."/>
        </authorList>
    </citation>
    <scope>NUCLEOTIDE SEQUENCE [GENOMIC DNA]</scope>
    <scope>FUNCTION IN ARGININE CATABOLISM</scope>
    <scope>SUBCELLULAR LOCATION</scope>
    <scope>INDUCTION</scope>
</reference>
<reference key="2">
    <citation type="book" date="2006" name="Gram positive pathogens, 2nd edition">
        <title>The Staphylococcus aureus NCTC 8325 genome.</title>
        <editorList>
            <person name="Fischetti V."/>
            <person name="Novick R."/>
            <person name="Ferretti J."/>
            <person name="Portnoy D."/>
            <person name="Rood J."/>
        </editorList>
        <authorList>
            <person name="Gillaspy A.F."/>
            <person name="Worrell V."/>
            <person name="Orvis J."/>
            <person name="Roe B.A."/>
            <person name="Dyer D.W."/>
            <person name="Iandolo J.J."/>
        </authorList>
    </citation>
    <scope>NUCLEOTIDE SEQUENCE [LARGE SCALE GENOMIC DNA]</scope>
    <source>
        <strain>NCTC 8325 / PS 47</strain>
    </source>
</reference>